<evidence type="ECO:0000255" key="1">
    <source>
        <dbReference type="HAMAP-Rule" id="MF_00001"/>
    </source>
</evidence>
<organism>
    <name type="scientific">Chromobacterium violaceum (strain ATCC 12472 / DSM 30191 / JCM 1249 / CCUG 213 / NBRC 12614 / NCIMB 9131 / NCTC 9757 / MK)</name>
    <dbReference type="NCBI Taxonomy" id="243365"/>
    <lineage>
        <taxon>Bacteria</taxon>
        <taxon>Pseudomonadati</taxon>
        <taxon>Pseudomonadota</taxon>
        <taxon>Betaproteobacteria</taxon>
        <taxon>Neisseriales</taxon>
        <taxon>Chromobacteriaceae</taxon>
        <taxon>Chromobacterium</taxon>
    </lineage>
</organism>
<comment type="function">
    <text evidence="1">Catalyzes the condensation of carbamoyl phosphate and aspartate to form carbamoyl aspartate and inorganic phosphate, the committed step in the de novo pyrimidine nucleotide biosynthesis pathway.</text>
</comment>
<comment type="catalytic activity">
    <reaction evidence="1">
        <text>carbamoyl phosphate + L-aspartate = N-carbamoyl-L-aspartate + phosphate + H(+)</text>
        <dbReference type="Rhea" id="RHEA:20013"/>
        <dbReference type="ChEBI" id="CHEBI:15378"/>
        <dbReference type="ChEBI" id="CHEBI:29991"/>
        <dbReference type="ChEBI" id="CHEBI:32814"/>
        <dbReference type="ChEBI" id="CHEBI:43474"/>
        <dbReference type="ChEBI" id="CHEBI:58228"/>
        <dbReference type="EC" id="2.1.3.2"/>
    </reaction>
</comment>
<comment type="pathway">
    <text evidence="1">Pyrimidine metabolism; UMP biosynthesis via de novo pathway; (S)-dihydroorotate from bicarbonate: step 2/3.</text>
</comment>
<comment type="subunit">
    <text evidence="1">Heterododecamer (2C3:3R2) of six catalytic PyrB chains organized as two trimers (C3), and six regulatory PyrI chains organized as three dimers (R2).</text>
</comment>
<comment type="similarity">
    <text evidence="1">Belongs to the aspartate/ornithine carbamoyltransferase superfamily. ATCase family.</text>
</comment>
<name>PYRB_CHRVO</name>
<gene>
    <name evidence="1" type="primary">pyrB</name>
    <name type="ordered locus">CV_0369</name>
</gene>
<proteinExistence type="inferred from homology"/>
<accession>Q7P145</accession>
<protein>
    <recommendedName>
        <fullName evidence="1">Aspartate carbamoyltransferase catalytic subunit</fullName>
        <ecNumber evidence="1">2.1.3.2</ecNumber>
    </recommendedName>
    <alternativeName>
        <fullName evidence="1">Aspartate transcarbamylase</fullName>
        <shortName evidence="1">ATCase</shortName>
    </alternativeName>
</protein>
<reference key="1">
    <citation type="journal article" date="2003" name="Proc. Natl. Acad. Sci. U.S.A.">
        <title>The complete genome sequence of Chromobacterium violaceum reveals remarkable and exploitable bacterial adaptability.</title>
        <authorList>
            <person name="Vasconcelos A.T.R."/>
            <person name="de Almeida D.F."/>
            <person name="Hungria M."/>
            <person name="Guimaraes C.T."/>
            <person name="Antonio R.V."/>
            <person name="Almeida F.C."/>
            <person name="de Almeida L.G.P."/>
            <person name="de Almeida R."/>
            <person name="Alves-Gomes J.A."/>
            <person name="Andrade E.M."/>
            <person name="Araripe J."/>
            <person name="de Araujo M.F.F."/>
            <person name="Astolfi-Filho S."/>
            <person name="Azevedo V."/>
            <person name="Baptista A.J."/>
            <person name="Bataus L.A.M."/>
            <person name="Batista J.S."/>
            <person name="Belo A."/>
            <person name="van den Berg C."/>
            <person name="Bogo M."/>
            <person name="Bonatto S."/>
            <person name="Bordignon J."/>
            <person name="Brigido M.M."/>
            <person name="Brito C.A."/>
            <person name="Brocchi M."/>
            <person name="Burity H.A."/>
            <person name="Camargo A.A."/>
            <person name="Cardoso D.D.P."/>
            <person name="Carneiro N.P."/>
            <person name="Carraro D.M."/>
            <person name="Carvalho C.M.B."/>
            <person name="Cascardo J.C.M."/>
            <person name="Cavada B.S."/>
            <person name="Chueire L.M.O."/>
            <person name="Creczynski-Pasa T.B."/>
            <person name="Cunha-Junior N.C."/>
            <person name="Fagundes N."/>
            <person name="Falcao C.L."/>
            <person name="Fantinatti F."/>
            <person name="Farias I.P."/>
            <person name="Felipe M.S.S."/>
            <person name="Ferrari L.P."/>
            <person name="Ferro J.A."/>
            <person name="Ferro M.I.T."/>
            <person name="Franco G.R."/>
            <person name="Freitas N.S.A."/>
            <person name="Furlan L.R."/>
            <person name="Gazzinelli R.T."/>
            <person name="Gomes E.A."/>
            <person name="Goncalves P.R."/>
            <person name="Grangeiro T.B."/>
            <person name="Grattapaglia D."/>
            <person name="Grisard E.C."/>
            <person name="Hanna E.S."/>
            <person name="Jardim S.N."/>
            <person name="Laurino J."/>
            <person name="Leoi L.C.T."/>
            <person name="Lima L.F.A."/>
            <person name="Loureiro M.F."/>
            <person name="Lyra M.C.C.P."/>
            <person name="Madeira H.M.F."/>
            <person name="Manfio G.P."/>
            <person name="Maranhao A.Q."/>
            <person name="Martins W.S."/>
            <person name="di Mauro S.M.Z."/>
            <person name="de Medeiros S.R.B."/>
            <person name="Meissner R.V."/>
            <person name="Moreira M.A.M."/>
            <person name="Nascimento F.F."/>
            <person name="Nicolas M.F."/>
            <person name="Oliveira J.G."/>
            <person name="Oliveira S.C."/>
            <person name="Paixao R.F.C."/>
            <person name="Parente J.A."/>
            <person name="Pedrosa F.O."/>
            <person name="Pena S.D.J."/>
            <person name="Pereira J.O."/>
            <person name="Pereira M."/>
            <person name="Pinto L.S.R.C."/>
            <person name="Pinto L.S."/>
            <person name="Porto J.I.R."/>
            <person name="Potrich D.P."/>
            <person name="Ramalho-Neto C.E."/>
            <person name="Reis A.M.M."/>
            <person name="Rigo L.U."/>
            <person name="Rondinelli E."/>
            <person name="Santos E.B.P."/>
            <person name="Santos F.R."/>
            <person name="Schneider M.P.C."/>
            <person name="Seuanez H.N."/>
            <person name="Silva A.M.R."/>
            <person name="da Silva A.L.C."/>
            <person name="Silva D.W."/>
            <person name="Silva R."/>
            <person name="Simoes I.C."/>
            <person name="Simon D."/>
            <person name="Soares C.M.A."/>
            <person name="Soares R.B.A."/>
            <person name="Souza E.M."/>
            <person name="Souza K.R.L."/>
            <person name="Souza R.C."/>
            <person name="Steffens M.B.R."/>
            <person name="Steindel M."/>
            <person name="Teixeira S.R."/>
            <person name="Urmenyi T."/>
            <person name="Vettore A."/>
            <person name="Wassem R."/>
            <person name="Zaha A."/>
            <person name="Simpson A.J.G."/>
        </authorList>
    </citation>
    <scope>NUCLEOTIDE SEQUENCE [LARGE SCALE GENOMIC DNA]</scope>
    <source>
        <strain>ATCC 12472 / DSM 30191 / JCM 1249 / CCUG 213 / NBRC 12614 / NCIMB 9131 / NCTC 9757 / MK</strain>
    </source>
</reference>
<keyword id="KW-0665">Pyrimidine biosynthesis</keyword>
<keyword id="KW-1185">Reference proteome</keyword>
<keyword id="KW-0808">Transferase</keyword>
<feature type="chain" id="PRO_0000113118" description="Aspartate carbamoyltransferase catalytic subunit">
    <location>
        <begin position="1"/>
        <end position="302"/>
    </location>
</feature>
<feature type="binding site" evidence="1">
    <location>
        <position position="51"/>
    </location>
    <ligand>
        <name>carbamoyl phosphate</name>
        <dbReference type="ChEBI" id="CHEBI:58228"/>
    </ligand>
</feature>
<feature type="binding site" evidence="1">
    <location>
        <position position="52"/>
    </location>
    <ligand>
        <name>carbamoyl phosphate</name>
        <dbReference type="ChEBI" id="CHEBI:58228"/>
    </ligand>
</feature>
<feature type="binding site" evidence="1">
    <location>
        <position position="80"/>
    </location>
    <ligand>
        <name>L-aspartate</name>
        <dbReference type="ChEBI" id="CHEBI:29991"/>
    </ligand>
</feature>
<feature type="binding site" evidence="1">
    <location>
        <position position="101"/>
    </location>
    <ligand>
        <name>carbamoyl phosphate</name>
        <dbReference type="ChEBI" id="CHEBI:58228"/>
    </ligand>
</feature>
<feature type="binding site" evidence="1">
    <location>
        <position position="129"/>
    </location>
    <ligand>
        <name>carbamoyl phosphate</name>
        <dbReference type="ChEBI" id="CHEBI:58228"/>
    </ligand>
</feature>
<feature type="binding site" evidence="1">
    <location>
        <position position="132"/>
    </location>
    <ligand>
        <name>carbamoyl phosphate</name>
        <dbReference type="ChEBI" id="CHEBI:58228"/>
    </ligand>
</feature>
<feature type="binding site" evidence="1">
    <location>
        <position position="162"/>
    </location>
    <ligand>
        <name>L-aspartate</name>
        <dbReference type="ChEBI" id="CHEBI:29991"/>
    </ligand>
</feature>
<feature type="binding site" evidence="1">
    <location>
        <position position="223"/>
    </location>
    <ligand>
        <name>L-aspartate</name>
        <dbReference type="ChEBI" id="CHEBI:29991"/>
    </ligand>
</feature>
<feature type="binding site" evidence="1">
    <location>
        <position position="261"/>
    </location>
    <ligand>
        <name>carbamoyl phosphate</name>
        <dbReference type="ChEBI" id="CHEBI:58228"/>
    </ligand>
</feature>
<feature type="binding site" evidence="1">
    <location>
        <position position="262"/>
    </location>
    <ligand>
        <name>carbamoyl phosphate</name>
        <dbReference type="ChEBI" id="CHEBI:58228"/>
    </ligand>
</feature>
<dbReference type="EC" id="2.1.3.2" evidence="1"/>
<dbReference type="EMBL" id="AE016825">
    <property type="protein sequence ID" value="AAQ58047.1"/>
    <property type="molecule type" value="Genomic_DNA"/>
</dbReference>
<dbReference type="SMR" id="Q7P145"/>
<dbReference type="STRING" id="243365.CV_0369"/>
<dbReference type="KEGG" id="cvi:CV_0369"/>
<dbReference type="eggNOG" id="COG0540">
    <property type="taxonomic scope" value="Bacteria"/>
</dbReference>
<dbReference type="HOGENOM" id="CLU_043846_1_2_4"/>
<dbReference type="UniPathway" id="UPA00070">
    <property type="reaction ID" value="UER00116"/>
</dbReference>
<dbReference type="Proteomes" id="UP000001424">
    <property type="component" value="Chromosome"/>
</dbReference>
<dbReference type="GO" id="GO:0005829">
    <property type="term" value="C:cytosol"/>
    <property type="evidence" value="ECO:0007669"/>
    <property type="project" value="TreeGrafter"/>
</dbReference>
<dbReference type="GO" id="GO:0016597">
    <property type="term" value="F:amino acid binding"/>
    <property type="evidence" value="ECO:0007669"/>
    <property type="project" value="InterPro"/>
</dbReference>
<dbReference type="GO" id="GO:0004070">
    <property type="term" value="F:aspartate carbamoyltransferase activity"/>
    <property type="evidence" value="ECO:0007669"/>
    <property type="project" value="UniProtKB-UniRule"/>
</dbReference>
<dbReference type="GO" id="GO:0006207">
    <property type="term" value="P:'de novo' pyrimidine nucleobase biosynthetic process"/>
    <property type="evidence" value="ECO:0007669"/>
    <property type="project" value="InterPro"/>
</dbReference>
<dbReference type="GO" id="GO:0044205">
    <property type="term" value="P:'de novo' UMP biosynthetic process"/>
    <property type="evidence" value="ECO:0007669"/>
    <property type="project" value="UniProtKB-UniRule"/>
</dbReference>
<dbReference type="GO" id="GO:0006520">
    <property type="term" value="P:amino acid metabolic process"/>
    <property type="evidence" value="ECO:0007669"/>
    <property type="project" value="InterPro"/>
</dbReference>
<dbReference type="FunFam" id="3.40.50.1370:FF:000001">
    <property type="entry name" value="Aspartate carbamoyltransferase"/>
    <property type="match status" value="1"/>
</dbReference>
<dbReference type="FunFam" id="3.40.50.1370:FF:000002">
    <property type="entry name" value="Aspartate carbamoyltransferase 2"/>
    <property type="match status" value="1"/>
</dbReference>
<dbReference type="Gene3D" id="3.40.50.1370">
    <property type="entry name" value="Aspartate/ornithine carbamoyltransferase"/>
    <property type="match status" value="2"/>
</dbReference>
<dbReference type="HAMAP" id="MF_00001">
    <property type="entry name" value="Asp_carb_tr"/>
    <property type="match status" value="1"/>
</dbReference>
<dbReference type="InterPro" id="IPR006132">
    <property type="entry name" value="Asp/Orn_carbamoyltranf_P-bd"/>
</dbReference>
<dbReference type="InterPro" id="IPR006130">
    <property type="entry name" value="Asp/Orn_carbamoylTrfase"/>
</dbReference>
<dbReference type="InterPro" id="IPR036901">
    <property type="entry name" value="Asp/Orn_carbamoylTrfase_sf"/>
</dbReference>
<dbReference type="InterPro" id="IPR002082">
    <property type="entry name" value="Asp_carbamoyltransf"/>
</dbReference>
<dbReference type="InterPro" id="IPR006131">
    <property type="entry name" value="Asp_carbamoyltransf_Asp/Orn-bd"/>
</dbReference>
<dbReference type="NCBIfam" id="TIGR00670">
    <property type="entry name" value="asp_carb_tr"/>
    <property type="match status" value="1"/>
</dbReference>
<dbReference type="NCBIfam" id="NF002032">
    <property type="entry name" value="PRK00856.1"/>
    <property type="match status" value="1"/>
</dbReference>
<dbReference type="PANTHER" id="PTHR45753:SF6">
    <property type="entry name" value="ASPARTATE CARBAMOYLTRANSFERASE"/>
    <property type="match status" value="1"/>
</dbReference>
<dbReference type="PANTHER" id="PTHR45753">
    <property type="entry name" value="ORNITHINE CARBAMOYLTRANSFERASE, MITOCHONDRIAL"/>
    <property type="match status" value="1"/>
</dbReference>
<dbReference type="Pfam" id="PF00185">
    <property type="entry name" value="OTCace"/>
    <property type="match status" value="1"/>
</dbReference>
<dbReference type="Pfam" id="PF02729">
    <property type="entry name" value="OTCace_N"/>
    <property type="match status" value="1"/>
</dbReference>
<dbReference type="PRINTS" id="PR00100">
    <property type="entry name" value="AOTCASE"/>
</dbReference>
<dbReference type="PRINTS" id="PR00101">
    <property type="entry name" value="ATCASE"/>
</dbReference>
<dbReference type="SUPFAM" id="SSF53671">
    <property type="entry name" value="Aspartate/ornithine carbamoyltransferase"/>
    <property type="match status" value="1"/>
</dbReference>
<dbReference type="PROSITE" id="PS00097">
    <property type="entry name" value="CARBAMOYLTRANSFERASE"/>
    <property type="match status" value="1"/>
</dbReference>
<sequence length="302" mass="33488">MYRKHIISIPDFSREELELVVDTAARLKQSPRGDLLQDKLVASCFFEPSTRTRLSFETAVQRLGGNIIGFADGGNTSAKKGETLADSIKIISSYTDAVVMRHPKEGAARLASEFSAVPVINGGDGSNQHPTQTLLDLFSIRETQGRLDGLTVAFAGDLKYGRTVHSLAQALSLFGARFYFVSPEVLAMPDYICEELDEKGISYTVADSLEAVIPEVDVLYMTRVQRERFDEAEFRKIQGQYALRADMLKHARPGMKVLHPLPRVDEIAVDVDATPHAYYFEQAKNGVYARQALLSLVLNETV</sequence>